<dbReference type="EMBL" id="AC025416">
    <property type="protein sequence ID" value="AAF79653.1"/>
    <property type="status" value="ALT_SEQ"/>
    <property type="molecule type" value="Genomic_DNA"/>
</dbReference>
<dbReference type="EMBL" id="CP002684">
    <property type="protein sequence ID" value="AEE28882.1"/>
    <property type="molecule type" value="Genomic_DNA"/>
</dbReference>
<dbReference type="EMBL" id="CP002684">
    <property type="protein sequence ID" value="AEE28883.1"/>
    <property type="molecule type" value="Genomic_DNA"/>
</dbReference>
<dbReference type="EMBL" id="CP002684">
    <property type="protein sequence ID" value="ANM58832.1"/>
    <property type="molecule type" value="Genomic_DNA"/>
</dbReference>
<dbReference type="EMBL" id="BT010824">
    <property type="protein sequence ID" value="AAR24191.1"/>
    <property type="molecule type" value="mRNA"/>
</dbReference>
<dbReference type="EMBL" id="BT011299">
    <property type="protein sequence ID" value="AAR92335.1"/>
    <property type="molecule type" value="mRNA"/>
</dbReference>
<dbReference type="RefSeq" id="NP_001321241.1">
    <property type="nucleotide sequence ID" value="NM_001332036.1"/>
</dbReference>
<dbReference type="RefSeq" id="NP_172706.1">
    <property type="nucleotide sequence ID" value="NM_101116.6"/>
</dbReference>
<dbReference type="RefSeq" id="NP_849652.1">
    <property type="nucleotide sequence ID" value="NM_179321.3"/>
</dbReference>
<dbReference type="PDB" id="1WFP">
    <property type="method" value="NMR"/>
    <property type="chains" value="A=89-149"/>
</dbReference>
<dbReference type="PDBsum" id="1WFP"/>
<dbReference type="SMR" id="Q6NNI8"/>
<dbReference type="BioGRID" id="23041">
    <property type="interactions" value="8"/>
</dbReference>
<dbReference type="FunCoup" id="Q6NNI8">
    <property type="interactions" value="2454"/>
</dbReference>
<dbReference type="IntAct" id="Q6NNI8">
    <property type="interactions" value="7"/>
</dbReference>
<dbReference type="STRING" id="3702.Q6NNI8"/>
<dbReference type="PaxDb" id="3702-AT1G12440.2"/>
<dbReference type="ProteomicsDB" id="226665"/>
<dbReference type="EnsemblPlants" id="AT1G12440.1">
    <property type="protein sequence ID" value="AT1G12440.1"/>
    <property type="gene ID" value="AT1G12440"/>
</dbReference>
<dbReference type="EnsemblPlants" id="AT1G12440.2">
    <property type="protein sequence ID" value="AT1G12440.2"/>
    <property type="gene ID" value="AT1G12440"/>
</dbReference>
<dbReference type="EnsemblPlants" id="AT1G12440.3">
    <property type="protein sequence ID" value="AT1G12440.3"/>
    <property type="gene ID" value="AT1G12440"/>
</dbReference>
<dbReference type="GeneID" id="837801"/>
<dbReference type="Gramene" id="AT1G12440.1">
    <property type="protein sequence ID" value="AT1G12440.1"/>
    <property type="gene ID" value="AT1G12440"/>
</dbReference>
<dbReference type="Gramene" id="AT1G12440.2">
    <property type="protein sequence ID" value="AT1G12440.2"/>
    <property type="gene ID" value="AT1G12440"/>
</dbReference>
<dbReference type="Gramene" id="AT1G12440.3">
    <property type="protein sequence ID" value="AT1G12440.3"/>
    <property type="gene ID" value="AT1G12440"/>
</dbReference>
<dbReference type="KEGG" id="ath:AT1G12440"/>
<dbReference type="Araport" id="AT1G12440"/>
<dbReference type="TAIR" id="AT1G12440"/>
<dbReference type="eggNOG" id="KOG3173">
    <property type="taxonomic scope" value="Eukaryota"/>
</dbReference>
<dbReference type="HOGENOM" id="CLU_057016_5_3_1"/>
<dbReference type="InParanoid" id="Q6NNI8"/>
<dbReference type="OMA" id="PESHECQ"/>
<dbReference type="OrthoDB" id="428577at2759"/>
<dbReference type="PhylomeDB" id="Q6NNI8"/>
<dbReference type="EvolutionaryTrace" id="Q6NNI8"/>
<dbReference type="PRO" id="PR:Q6NNI8"/>
<dbReference type="Proteomes" id="UP000006548">
    <property type="component" value="Chromosome 1"/>
</dbReference>
<dbReference type="ExpressionAtlas" id="Q6NNI8">
    <property type="expression patterns" value="baseline and differential"/>
</dbReference>
<dbReference type="GO" id="GO:0003677">
    <property type="term" value="F:DNA binding"/>
    <property type="evidence" value="ECO:0007669"/>
    <property type="project" value="InterPro"/>
</dbReference>
<dbReference type="GO" id="GO:0008270">
    <property type="term" value="F:zinc ion binding"/>
    <property type="evidence" value="ECO:0007669"/>
    <property type="project" value="UniProtKB-KW"/>
</dbReference>
<dbReference type="FunFam" id="1.20.5.4770:FF:000008">
    <property type="entry name" value="Zinc finger A20 and AN1 domain-containing stress-associated protein 1"/>
    <property type="match status" value="1"/>
</dbReference>
<dbReference type="FunFam" id="4.10.1110.10:FF:000001">
    <property type="entry name" value="Zinc finger AN1-type containing 6"/>
    <property type="match status" value="1"/>
</dbReference>
<dbReference type="Gene3D" id="1.20.5.4770">
    <property type="match status" value="1"/>
</dbReference>
<dbReference type="Gene3D" id="4.10.1110.10">
    <property type="entry name" value="AN1-like Zinc finger"/>
    <property type="match status" value="1"/>
</dbReference>
<dbReference type="InterPro" id="IPR035896">
    <property type="entry name" value="AN1-like_Znf"/>
</dbReference>
<dbReference type="InterPro" id="IPR050652">
    <property type="entry name" value="AN1_A20_ZnFinger"/>
</dbReference>
<dbReference type="InterPro" id="IPR002653">
    <property type="entry name" value="Znf_A20"/>
</dbReference>
<dbReference type="InterPro" id="IPR000058">
    <property type="entry name" value="Znf_AN1"/>
</dbReference>
<dbReference type="PANTHER" id="PTHR10634">
    <property type="entry name" value="AN1-TYPE ZINC FINGER PROTEIN"/>
    <property type="match status" value="1"/>
</dbReference>
<dbReference type="PANTHER" id="PTHR10634:SF116">
    <property type="entry name" value="ZINC FINGER A20 AND AN1 DOMAIN-CONTAINING STRESS-ASSOCIATED PROTEIN 1"/>
    <property type="match status" value="1"/>
</dbReference>
<dbReference type="Pfam" id="PF01754">
    <property type="entry name" value="zf-A20"/>
    <property type="match status" value="1"/>
</dbReference>
<dbReference type="Pfam" id="PF01428">
    <property type="entry name" value="zf-AN1"/>
    <property type="match status" value="1"/>
</dbReference>
<dbReference type="SMART" id="SM00259">
    <property type="entry name" value="ZnF_A20"/>
    <property type="match status" value="1"/>
</dbReference>
<dbReference type="SMART" id="SM00154">
    <property type="entry name" value="ZnF_AN1"/>
    <property type="match status" value="1"/>
</dbReference>
<dbReference type="SUPFAM" id="SSF118310">
    <property type="entry name" value="AN1-like Zinc finger"/>
    <property type="match status" value="1"/>
</dbReference>
<dbReference type="SUPFAM" id="SSF57716">
    <property type="entry name" value="Glucocorticoid receptor-like (DNA-binding domain)"/>
    <property type="match status" value="1"/>
</dbReference>
<dbReference type="PROSITE" id="PS51036">
    <property type="entry name" value="ZF_A20"/>
    <property type="match status" value="1"/>
</dbReference>
<dbReference type="PROSITE" id="PS51039">
    <property type="entry name" value="ZF_AN1"/>
    <property type="match status" value="1"/>
</dbReference>
<comment type="function">
    <text evidence="1">May be involved in environmental stress response.</text>
</comment>
<comment type="sequence caution" evidence="5">
    <conflict type="erroneous gene model prediction">
        <sequence resource="EMBL-CDS" id="AAF79653"/>
    </conflict>
</comment>
<feature type="chain" id="PRO_0000066577" description="Zinc finger A20 and AN1 domain-containing stress-associated protein 1">
    <location>
        <begin position="1"/>
        <end position="168"/>
    </location>
</feature>
<feature type="zinc finger region" description="A20-type" evidence="3">
    <location>
        <begin position="13"/>
        <end position="47"/>
    </location>
</feature>
<feature type="zinc finger region" description="AN1-type" evidence="2">
    <location>
        <begin position="103"/>
        <end position="149"/>
    </location>
</feature>
<feature type="region of interest" description="Disordered" evidence="4">
    <location>
        <begin position="49"/>
        <end position="105"/>
    </location>
</feature>
<feature type="compositionally biased region" description="Polar residues" evidence="4">
    <location>
        <begin position="60"/>
        <end position="76"/>
    </location>
</feature>
<feature type="compositionally biased region" description="Low complexity" evidence="4">
    <location>
        <begin position="82"/>
        <end position="94"/>
    </location>
</feature>
<feature type="binding site" evidence="3">
    <location>
        <position position="19"/>
    </location>
    <ligand>
        <name>Zn(2+)</name>
        <dbReference type="ChEBI" id="CHEBI:29105"/>
        <label>1</label>
    </ligand>
</feature>
<feature type="binding site" evidence="3">
    <location>
        <position position="23"/>
    </location>
    <ligand>
        <name>Zn(2+)</name>
        <dbReference type="ChEBI" id="CHEBI:29105"/>
        <label>1</label>
    </ligand>
</feature>
<feature type="binding site" evidence="3">
    <location>
        <position position="35"/>
    </location>
    <ligand>
        <name>Zn(2+)</name>
        <dbReference type="ChEBI" id="CHEBI:29105"/>
        <label>1</label>
    </ligand>
</feature>
<feature type="binding site" evidence="3">
    <location>
        <position position="38"/>
    </location>
    <ligand>
        <name>Zn(2+)</name>
        <dbReference type="ChEBI" id="CHEBI:29105"/>
        <label>1</label>
    </ligand>
</feature>
<feature type="binding site" evidence="2">
    <location>
        <position position="109"/>
    </location>
    <ligand>
        <name>Zn(2+)</name>
        <dbReference type="ChEBI" id="CHEBI:29105"/>
        <label>2</label>
    </ligand>
</feature>
<feature type="binding site" evidence="2">
    <location>
        <position position="112"/>
    </location>
    <ligand>
        <name>Zn(2+)</name>
        <dbReference type="ChEBI" id="CHEBI:29105"/>
        <label>2</label>
    </ligand>
</feature>
<feature type="binding site" evidence="2">
    <location>
        <position position="123"/>
    </location>
    <ligand>
        <name>Zn(2+)</name>
        <dbReference type="ChEBI" id="CHEBI:29105"/>
        <label>3</label>
    </ligand>
</feature>
<feature type="binding site" evidence="2">
    <location>
        <position position="125"/>
    </location>
    <ligand>
        <name>Zn(2+)</name>
        <dbReference type="ChEBI" id="CHEBI:29105"/>
        <label>3</label>
    </ligand>
</feature>
<feature type="binding site" evidence="2">
    <location>
        <position position="130"/>
    </location>
    <ligand>
        <name>Zn(2+)</name>
        <dbReference type="ChEBI" id="CHEBI:29105"/>
        <label>2</label>
    </ligand>
</feature>
<feature type="binding site" evidence="2">
    <location>
        <position position="133"/>
    </location>
    <ligand>
        <name>Zn(2+)</name>
        <dbReference type="ChEBI" id="CHEBI:29105"/>
        <label>2</label>
    </ligand>
</feature>
<feature type="binding site" evidence="2">
    <location>
        <position position="139"/>
    </location>
    <ligand>
        <name>Zn(2+)</name>
        <dbReference type="ChEBI" id="CHEBI:29105"/>
        <label>3</label>
    </ligand>
</feature>
<feature type="binding site" evidence="2">
    <location>
        <position position="141"/>
    </location>
    <ligand>
        <name>Zn(2+)</name>
        <dbReference type="ChEBI" id="CHEBI:29105"/>
        <label>3</label>
    </ligand>
</feature>
<feature type="strand" evidence="6">
    <location>
        <begin position="110"/>
        <end position="112"/>
    </location>
</feature>
<feature type="turn" evidence="6">
    <location>
        <begin position="117"/>
        <end position="119"/>
    </location>
</feature>
<feature type="turn" evidence="6">
    <location>
        <begin position="131"/>
        <end position="133"/>
    </location>
</feature>
<feature type="turn" evidence="6">
    <location>
        <begin position="136"/>
        <end position="138"/>
    </location>
</feature>
<proteinExistence type="evidence at protein level"/>
<sequence>MGSEQNDSTSFSPSEPKLCVKGCGFFGSPSNMNLCSKCYRDIRATEEQTASAKAAVEKSLNPNKPKTQPQQSQEITQGVLGSGSSSSSTRGGDSAAAPLDPPKSTATRCLSCNKKVGVTGFKCRCGSTFCGTHRYPESHECQFDFKGVAREAIAKANPVVKADKVDRI</sequence>
<accession>Q6NNI8</accession>
<accession>Q9LNA2</accession>
<reference key="1">
    <citation type="journal article" date="2000" name="Nature">
        <title>Sequence and analysis of chromosome 1 of the plant Arabidopsis thaliana.</title>
        <authorList>
            <person name="Theologis A."/>
            <person name="Ecker J.R."/>
            <person name="Palm C.J."/>
            <person name="Federspiel N.A."/>
            <person name="Kaul S."/>
            <person name="White O."/>
            <person name="Alonso J."/>
            <person name="Altafi H."/>
            <person name="Araujo R."/>
            <person name="Bowman C.L."/>
            <person name="Brooks S.Y."/>
            <person name="Buehler E."/>
            <person name="Chan A."/>
            <person name="Chao Q."/>
            <person name="Chen H."/>
            <person name="Cheuk R.F."/>
            <person name="Chin C.W."/>
            <person name="Chung M.K."/>
            <person name="Conn L."/>
            <person name="Conway A.B."/>
            <person name="Conway A.R."/>
            <person name="Creasy T.H."/>
            <person name="Dewar K."/>
            <person name="Dunn P."/>
            <person name="Etgu P."/>
            <person name="Feldblyum T.V."/>
            <person name="Feng J.-D."/>
            <person name="Fong B."/>
            <person name="Fujii C.Y."/>
            <person name="Gill J.E."/>
            <person name="Goldsmith A.D."/>
            <person name="Haas B."/>
            <person name="Hansen N.F."/>
            <person name="Hughes B."/>
            <person name="Huizar L."/>
            <person name="Hunter J.L."/>
            <person name="Jenkins J."/>
            <person name="Johnson-Hopson C."/>
            <person name="Khan S."/>
            <person name="Khaykin E."/>
            <person name="Kim C.J."/>
            <person name="Koo H.L."/>
            <person name="Kremenetskaia I."/>
            <person name="Kurtz D.B."/>
            <person name="Kwan A."/>
            <person name="Lam B."/>
            <person name="Langin-Hooper S."/>
            <person name="Lee A."/>
            <person name="Lee J.M."/>
            <person name="Lenz C.A."/>
            <person name="Li J.H."/>
            <person name="Li Y.-P."/>
            <person name="Lin X."/>
            <person name="Liu S.X."/>
            <person name="Liu Z.A."/>
            <person name="Luros J.S."/>
            <person name="Maiti R."/>
            <person name="Marziali A."/>
            <person name="Militscher J."/>
            <person name="Miranda M."/>
            <person name="Nguyen M."/>
            <person name="Nierman W.C."/>
            <person name="Osborne B.I."/>
            <person name="Pai G."/>
            <person name="Peterson J."/>
            <person name="Pham P.K."/>
            <person name="Rizzo M."/>
            <person name="Rooney T."/>
            <person name="Rowley D."/>
            <person name="Sakano H."/>
            <person name="Salzberg S.L."/>
            <person name="Schwartz J.R."/>
            <person name="Shinn P."/>
            <person name="Southwick A.M."/>
            <person name="Sun H."/>
            <person name="Tallon L.J."/>
            <person name="Tambunga G."/>
            <person name="Toriumi M.J."/>
            <person name="Town C.D."/>
            <person name="Utterback T."/>
            <person name="Van Aken S."/>
            <person name="Vaysberg M."/>
            <person name="Vysotskaia V.S."/>
            <person name="Walker M."/>
            <person name="Wu D."/>
            <person name="Yu G."/>
            <person name="Fraser C.M."/>
            <person name="Venter J.C."/>
            <person name="Davis R.W."/>
        </authorList>
    </citation>
    <scope>NUCLEOTIDE SEQUENCE [LARGE SCALE GENOMIC DNA]</scope>
    <source>
        <strain>cv. Columbia</strain>
    </source>
</reference>
<reference key="2">
    <citation type="journal article" date="2017" name="Plant J.">
        <title>Araport11: a complete reannotation of the Arabidopsis thaliana reference genome.</title>
        <authorList>
            <person name="Cheng C.Y."/>
            <person name="Krishnakumar V."/>
            <person name="Chan A.P."/>
            <person name="Thibaud-Nissen F."/>
            <person name="Schobel S."/>
            <person name="Town C.D."/>
        </authorList>
    </citation>
    <scope>GENOME REANNOTATION</scope>
    <source>
        <strain>cv. Columbia</strain>
    </source>
</reference>
<reference key="3">
    <citation type="submission" date="2004-01" db="EMBL/GenBank/DDBJ databases">
        <title>Arabidopsis ORF clones.</title>
        <authorList>
            <person name="Cheuk R.F."/>
            <person name="Chen H."/>
            <person name="Kim C.J."/>
            <person name="Shinn P."/>
            <person name="Ecker J.R."/>
        </authorList>
    </citation>
    <scope>NUCLEOTIDE SEQUENCE [LARGE SCALE MRNA]</scope>
    <source>
        <strain>cv. Columbia</strain>
    </source>
</reference>
<reference key="4">
    <citation type="journal article" date="2006" name="Mol. Genet. Genomics">
        <title>Genome-wide analysis of the stress associated protein (SAP) gene family containing A20/AN1 zinc-finger(s) in rice and their phylogenetic relationship with Arabidopsis.</title>
        <authorList>
            <person name="Vij S."/>
            <person name="Tyagi A.K."/>
        </authorList>
    </citation>
    <scope>GENE FAMILY</scope>
</reference>
<reference key="5">
    <citation type="submission" date="2004-11" db="PDB data bank">
        <title>Solution structure of the ZF-AN1 domain from Arabidopsis thaliana F5O11.17 protein.</title>
        <authorList>
            <consortium name="RIKEN structural genomics initiative (RSGI)"/>
        </authorList>
    </citation>
    <scope>STRUCTURE BY NMR OF 84-149</scope>
</reference>
<organism>
    <name type="scientific">Arabidopsis thaliana</name>
    <name type="common">Mouse-ear cress</name>
    <dbReference type="NCBI Taxonomy" id="3702"/>
    <lineage>
        <taxon>Eukaryota</taxon>
        <taxon>Viridiplantae</taxon>
        <taxon>Streptophyta</taxon>
        <taxon>Embryophyta</taxon>
        <taxon>Tracheophyta</taxon>
        <taxon>Spermatophyta</taxon>
        <taxon>Magnoliopsida</taxon>
        <taxon>eudicotyledons</taxon>
        <taxon>Gunneridae</taxon>
        <taxon>Pentapetalae</taxon>
        <taxon>rosids</taxon>
        <taxon>malvids</taxon>
        <taxon>Brassicales</taxon>
        <taxon>Brassicaceae</taxon>
        <taxon>Camelineae</taxon>
        <taxon>Arabidopsis</taxon>
    </lineage>
</organism>
<gene>
    <name type="primary">SAP1</name>
    <name type="ordered locus">At1g12440</name>
    <name type="ORF">F5O11.17</name>
</gene>
<evidence type="ECO:0000250" key="1"/>
<evidence type="ECO:0000255" key="2">
    <source>
        <dbReference type="PROSITE-ProRule" id="PRU00449"/>
    </source>
</evidence>
<evidence type="ECO:0000255" key="3">
    <source>
        <dbReference type="PROSITE-ProRule" id="PRU00451"/>
    </source>
</evidence>
<evidence type="ECO:0000256" key="4">
    <source>
        <dbReference type="SAM" id="MobiDB-lite"/>
    </source>
</evidence>
<evidence type="ECO:0000305" key="5"/>
<evidence type="ECO:0007829" key="6">
    <source>
        <dbReference type="PDB" id="1WFP"/>
    </source>
</evidence>
<protein>
    <recommendedName>
        <fullName>Zinc finger A20 and AN1 domain-containing stress-associated protein 1</fullName>
        <shortName>AtSAP1</shortName>
    </recommendedName>
</protein>
<keyword id="KW-0002">3D-structure</keyword>
<keyword id="KW-0479">Metal-binding</keyword>
<keyword id="KW-1185">Reference proteome</keyword>
<keyword id="KW-0862">Zinc</keyword>
<keyword id="KW-0863">Zinc-finger</keyword>
<name>SAP1_ARATH</name>